<evidence type="ECO:0000255" key="1">
    <source>
        <dbReference type="HAMAP-Rule" id="MF_00131"/>
    </source>
</evidence>
<reference key="1">
    <citation type="journal article" date="2016" name="Front. Microbiol.">
        <title>The complete genome sequence of hyperthermophile Dictyoglomus turgidum DSM 6724 reveals a specialized carbohydrate fermentor.</title>
        <authorList>
            <person name="Brumm P.J."/>
            <person name="Gowda K."/>
            <person name="Robb F.T."/>
            <person name="Mead D.A."/>
        </authorList>
    </citation>
    <scope>NUCLEOTIDE SEQUENCE [LARGE SCALE GENOMIC DNA]</scope>
    <source>
        <strain>DSM 6724 / Z-1310</strain>
    </source>
</reference>
<protein>
    <recommendedName>
        <fullName evidence="1">Tryptophan synthase alpha chain</fullName>
        <ecNumber evidence="1">4.2.1.20</ecNumber>
    </recommendedName>
</protein>
<name>TRPA_DICTD</name>
<keyword id="KW-0028">Amino-acid biosynthesis</keyword>
<keyword id="KW-0057">Aromatic amino acid biosynthesis</keyword>
<keyword id="KW-0456">Lyase</keyword>
<keyword id="KW-1185">Reference proteome</keyword>
<keyword id="KW-0822">Tryptophan biosynthesis</keyword>
<proteinExistence type="inferred from homology"/>
<comment type="function">
    <text evidence="1">The alpha subunit is responsible for the aldol cleavage of indoleglycerol phosphate to indole and glyceraldehyde 3-phosphate.</text>
</comment>
<comment type="catalytic activity">
    <reaction evidence="1">
        <text>(1S,2R)-1-C-(indol-3-yl)glycerol 3-phosphate + L-serine = D-glyceraldehyde 3-phosphate + L-tryptophan + H2O</text>
        <dbReference type="Rhea" id="RHEA:10532"/>
        <dbReference type="ChEBI" id="CHEBI:15377"/>
        <dbReference type="ChEBI" id="CHEBI:33384"/>
        <dbReference type="ChEBI" id="CHEBI:57912"/>
        <dbReference type="ChEBI" id="CHEBI:58866"/>
        <dbReference type="ChEBI" id="CHEBI:59776"/>
        <dbReference type="EC" id="4.2.1.20"/>
    </reaction>
</comment>
<comment type="pathway">
    <text evidence="1">Amino-acid biosynthesis; L-tryptophan biosynthesis; L-tryptophan from chorismate: step 5/5.</text>
</comment>
<comment type="subunit">
    <text evidence="1">Tetramer of two alpha and two beta chains.</text>
</comment>
<comment type="similarity">
    <text evidence="1">Belongs to the TrpA family.</text>
</comment>
<feature type="chain" id="PRO_1000117735" description="Tryptophan synthase alpha chain">
    <location>
        <begin position="1"/>
        <end position="253"/>
    </location>
</feature>
<feature type="active site" description="Proton acceptor" evidence="1">
    <location>
        <position position="46"/>
    </location>
</feature>
<feature type="active site" description="Proton acceptor" evidence="1">
    <location>
        <position position="57"/>
    </location>
</feature>
<sequence length="253" mass="28793">MSNLLEKFKNKSKSLFFIPFFVSGFPSFDFLEVFLLKNKDKIDILELGVPFSDPVADGPVLQEINYRAMVRGVNLNSTLDWLVRSGVSRNIDVILLLYFNLIQNKLEENLKRFKDTEIKGLVIPDLPMEEAETLIPLFNKYNLDLILFISPTTRDERMKKILKMAPSFLYCISVKGVTGERDKLPEEGVSFISRIKKETDKPLVWGFGLSNSSQIAALKGLVDGVIVGSAIGKRLLNNEDIQEYFDELYRATL</sequence>
<organism>
    <name type="scientific">Dictyoglomus turgidum (strain DSM 6724 / Z-1310)</name>
    <dbReference type="NCBI Taxonomy" id="515635"/>
    <lineage>
        <taxon>Bacteria</taxon>
        <taxon>Pseudomonadati</taxon>
        <taxon>Dictyoglomota</taxon>
        <taxon>Dictyoglomia</taxon>
        <taxon>Dictyoglomales</taxon>
        <taxon>Dictyoglomaceae</taxon>
        <taxon>Dictyoglomus</taxon>
    </lineage>
</organism>
<dbReference type="EC" id="4.2.1.20" evidence="1"/>
<dbReference type="EMBL" id="CP001251">
    <property type="protein sequence ID" value="ACK41981.1"/>
    <property type="molecule type" value="Genomic_DNA"/>
</dbReference>
<dbReference type="RefSeq" id="WP_012583066.1">
    <property type="nucleotide sequence ID" value="NC_011661.1"/>
</dbReference>
<dbReference type="RefSeq" id="YP_002352595.1">
    <property type="nucleotide sequence ID" value="NC_011661.1"/>
</dbReference>
<dbReference type="SMR" id="B8DZP8"/>
<dbReference type="FunCoup" id="B8DZP8">
    <property type="interactions" value="308"/>
</dbReference>
<dbReference type="STRING" id="515635.Dtur_0696"/>
<dbReference type="EnsemblBacteria" id="ACK41981">
    <property type="protein sequence ID" value="ACK41981"/>
    <property type="gene ID" value="Dtur_0696"/>
</dbReference>
<dbReference type="KEGG" id="dtu:Dtur_0696"/>
<dbReference type="PATRIC" id="fig|515635.4.peg.734"/>
<dbReference type="eggNOG" id="COG0159">
    <property type="taxonomic scope" value="Bacteria"/>
</dbReference>
<dbReference type="HOGENOM" id="CLU_016734_0_0_0"/>
<dbReference type="InParanoid" id="B8DZP8"/>
<dbReference type="OrthoDB" id="9804578at2"/>
<dbReference type="UniPathway" id="UPA00035">
    <property type="reaction ID" value="UER00044"/>
</dbReference>
<dbReference type="Proteomes" id="UP000007719">
    <property type="component" value="Chromosome"/>
</dbReference>
<dbReference type="GO" id="GO:0005829">
    <property type="term" value="C:cytosol"/>
    <property type="evidence" value="ECO:0000318"/>
    <property type="project" value="GO_Central"/>
</dbReference>
<dbReference type="GO" id="GO:0004834">
    <property type="term" value="F:tryptophan synthase activity"/>
    <property type="evidence" value="ECO:0000318"/>
    <property type="project" value="GO_Central"/>
</dbReference>
<dbReference type="GO" id="GO:0000162">
    <property type="term" value="P:L-tryptophan biosynthetic process"/>
    <property type="evidence" value="ECO:0000318"/>
    <property type="project" value="GO_Central"/>
</dbReference>
<dbReference type="CDD" id="cd04724">
    <property type="entry name" value="Tryptophan_synthase_alpha"/>
    <property type="match status" value="1"/>
</dbReference>
<dbReference type="Gene3D" id="3.20.20.70">
    <property type="entry name" value="Aldolase class I"/>
    <property type="match status" value="1"/>
</dbReference>
<dbReference type="HAMAP" id="MF_00131">
    <property type="entry name" value="Trp_synth_alpha"/>
    <property type="match status" value="1"/>
</dbReference>
<dbReference type="InterPro" id="IPR013785">
    <property type="entry name" value="Aldolase_TIM"/>
</dbReference>
<dbReference type="InterPro" id="IPR011060">
    <property type="entry name" value="RibuloseP-bd_barrel"/>
</dbReference>
<dbReference type="InterPro" id="IPR018204">
    <property type="entry name" value="Trp_synthase_alpha_AS"/>
</dbReference>
<dbReference type="InterPro" id="IPR002028">
    <property type="entry name" value="Trp_synthase_suA"/>
</dbReference>
<dbReference type="NCBIfam" id="TIGR00262">
    <property type="entry name" value="trpA"/>
    <property type="match status" value="1"/>
</dbReference>
<dbReference type="PANTHER" id="PTHR43406:SF1">
    <property type="entry name" value="TRYPTOPHAN SYNTHASE ALPHA CHAIN, CHLOROPLASTIC"/>
    <property type="match status" value="1"/>
</dbReference>
<dbReference type="PANTHER" id="PTHR43406">
    <property type="entry name" value="TRYPTOPHAN SYNTHASE, ALPHA CHAIN"/>
    <property type="match status" value="1"/>
</dbReference>
<dbReference type="Pfam" id="PF00290">
    <property type="entry name" value="Trp_syntA"/>
    <property type="match status" value="1"/>
</dbReference>
<dbReference type="SUPFAM" id="SSF51366">
    <property type="entry name" value="Ribulose-phoshate binding barrel"/>
    <property type="match status" value="1"/>
</dbReference>
<dbReference type="PROSITE" id="PS00167">
    <property type="entry name" value="TRP_SYNTHASE_ALPHA"/>
    <property type="match status" value="1"/>
</dbReference>
<gene>
    <name evidence="1" type="primary">trpA</name>
    <name type="ordered locus">Dtur_0696</name>
</gene>
<accession>B8DZP8</accession>